<comment type="function">
    <text evidence="1">This is one of the proteins that binds to the 5S RNA in the ribosome where it forms part of the central protuberance.</text>
</comment>
<comment type="subunit">
    <text evidence="1">Part of the 50S ribosomal subunit; part of the 5S rRNA/L5/L18/L25 subcomplex. Contacts the 5S rRNA. Binds to the 5S rRNA independently of L5 and L18.</text>
</comment>
<comment type="similarity">
    <text evidence="1">Belongs to the bacterial ribosomal protein bL25 family. CTC subfamily.</text>
</comment>
<sequence>MTAIKELKAVARPRAGKGAARAERRAGRVPAVIYGEKQEPVTISLNFREINKTIYAGHFLTTLFEIDVDGTKHRVIPRDYQLDVVKDFPLHVDFLRVSQGATVTVEVPVHFLNQEASPALKAGGTLNVVAHAVELECPAESIPASVEVDLTGAAYGDTFHLSGIKLPAGVTWAGHGDDTLATVVAPSGQADAAAEDAAEAAKA</sequence>
<name>RL25_XANP2</name>
<accession>A7IIK6</accession>
<organism>
    <name type="scientific">Xanthobacter autotrophicus (strain ATCC BAA-1158 / Py2)</name>
    <dbReference type="NCBI Taxonomy" id="78245"/>
    <lineage>
        <taxon>Bacteria</taxon>
        <taxon>Pseudomonadati</taxon>
        <taxon>Pseudomonadota</taxon>
        <taxon>Alphaproteobacteria</taxon>
        <taxon>Hyphomicrobiales</taxon>
        <taxon>Xanthobacteraceae</taxon>
        <taxon>Xanthobacter</taxon>
    </lineage>
</organism>
<protein>
    <recommendedName>
        <fullName evidence="1">Large ribosomal subunit protein bL25</fullName>
    </recommendedName>
    <alternativeName>
        <fullName evidence="2">50S ribosomal protein L25</fullName>
    </alternativeName>
    <alternativeName>
        <fullName evidence="1">General stress protein CTC</fullName>
    </alternativeName>
</protein>
<reference key="1">
    <citation type="submission" date="2007-07" db="EMBL/GenBank/DDBJ databases">
        <title>Complete sequence of chromosome of Xanthobacter autotrophicus Py2.</title>
        <authorList>
            <consortium name="US DOE Joint Genome Institute"/>
            <person name="Copeland A."/>
            <person name="Lucas S."/>
            <person name="Lapidus A."/>
            <person name="Barry K."/>
            <person name="Glavina del Rio T."/>
            <person name="Hammon N."/>
            <person name="Israni S."/>
            <person name="Dalin E."/>
            <person name="Tice H."/>
            <person name="Pitluck S."/>
            <person name="Sims D."/>
            <person name="Brettin T."/>
            <person name="Bruce D."/>
            <person name="Detter J.C."/>
            <person name="Han C."/>
            <person name="Tapia R."/>
            <person name="Brainard J."/>
            <person name="Schmutz J."/>
            <person name="Larimer F."/>
            <person name="Land M."/>
            <person name="Hauser L."/>
            <person name="Kyrpides N."/>
            <person name="Kim E."/>
            <person name="Ensigns S.A."/>
            <person name="Richardson P."/>
        </authorList>
    </citation>
    <scope>NUCLEOTIDE SEQUENCE [LARGE SCALE GENOMIC DNA]</scope>
    <source>
        <strain>ATCC BAA-1158 / Py2</strain>
    </source>
</reference>
<dbReference type="EMBL" id="CP000781">
    <property type="protein sequence ID" value="ABS67849.1"/>
    <property type="molecule type" value="Genomic_DNA"/>
</dbReference>
<dbReference type="SMR" id="A7IIK6"/>
<dbReference type="STRING" id="78245.Xaut_2607"/>
<dbReference type="KEGG" id="xau:Xaut_2607"/>
<dbReference type="eggNOG" id="COG1825">
    <property type="taxonomic scope" value="Bacteria"/>
</dbReference>
<dbReference type="HOGENOM" id="CLU_075939_0_0_5"/>
<dbReference type="OrthoDB" id="9806411at2"/>
<dbReference type="PhylomeDB" id="A7IIK6"/>
<dbReference type="Proteomes" id="UP000002417">
    <property type="component" value="Chromosome"/>
</dbReference>
<dbReference type="GO" id="GO:0022625">
    <property type="term" value="C:cytosolic large ribosomal subunit"/>
    <property type="evidence" value="ECO:0007669"/>
    <property type="project" value="TreeGrafter"/>
</dbReference>
<dbReference type="GO" id="GO:0008097">
    <property type="term" value="F:5S rRNA binding"/>
    <property type="evidence" value="ECO:0007669"/>
    <property type="project" value="InterPro"/>
</dbReference>
<dbReference type="GO" id="GO:0003735">
    <property type="term" value="F:structural constituent of ribosome"/>
    <property type="evidence" value="ECO:0007669"/>
    <property type="project" value="InterPro"/>
</dbReference>
<dbReference type="GO" id="GO:0006412">
    <property type="term" value="P:translation"/>
    <property type="evidence" value="ECO:0007669"/>
    <property type="project" value="UniProtKB-UniRule"/>
</dbReference>
<dbReference type="CDD" id="cd00495">
    <property type="entry name" value="Ribosomal_L25_TL5_CTC"/>
    <property type="match status" value="1"/>
</dbReference>
<dbReference type="Gene3D" id="2.170.120.20">
    <property type="entry name" value="Ribosomal protein L25, beta domain"/>
    <property type="match status" value="1"/>
</dbReference>
<dbReference type="Gene3D" id="2.40.240.10">
    <property type="entry name" value="Ribosomal Protein L25, Chain P"/>
    <property type="match status" value="1"/>
</dbReference>
<dbReference type="HAMAP" id="MF_01334">
    <property type="entry name" value="Ribosomal_bL25_CTC"/>
    <property type="match status" value="1"/>
</dbReference>
<dbReference type="InterPro" id="IPR020056">
    <property type="entry name" value="Rbsml_bL25/Gln-tRNA_synth_N"/>
</dbReference>
<dbReference type="InterPro" id="IPR011035">
    <property type="entry name" value="Ribosomal_bL25/Gln-tRNA_synth"/>
</dbReference>
<dbReference type="InterPro" id="IPR020057">
    <property type="entry name" value="Ribosomal_bL25_b-dom"/>
</dbReference>
<dbReference type="InterPro" id="IPR037121">
    <property type="entry name" value="Ribosomal_bL25_C"/>
</dbReference>
<dbReference type="InterPro" id="IPR001021">
    <property type="entry name" value="Ribosomal_bL25_long"/>
</dbReference>
<dbReference type="InterPro" id="IPR029751">
    <property type="entry name" value="Ribosomal_L25_dom"/>
</dbReference>
<dbReference type="InterPro" id="IPR020930">
    <property type="entry name" value="Ribosomal_uL5_bac-type"/>
</dbReference>
<dbReference type="NCBIfam" id="TIGR00731">
    <property type="entry name" value="bL25_bact_ctc"/>
    <property type="match status" value="1"/>
</dbReference>
<dbReference type="NCBIfam" id="NF004128">
    <property type="entry name" value="PRK05618.1-2"/>
    <property type="match status" value="1"/>
</dbReference>
<dbReference type="PANTHER" id="PTHR33284">
    <property type="entry name" value="RIBOSOMAL PROTEIN L25/GLN-TRNA SYNTHETASE, ANTI-CODON-BINDING DOMAIN-CONTAINING PROTEIN"/>
    <property type="match status" value="1"/>
</dbReference>
<dbReference type="PANTHER" id="PTHR33284:SF1">
    <property type="entry name" value="RIBOSOMAL PROTEIN L25_GLN-TRNA SYNTHETASE, ANTI-CODON-BINDING DOMAIN-CONTAINING PROTEIN"/>
    <property type="match status" value="1"/>
</dbReference>
<dbReference type="Pfam" id="PF01386">
    <property type="entry name" value="Ribosomal_L25p"/>
    <property type="match status" value="1"/>
</dbReference>
<dbReference type="Pfam" id="PF14693">
    <property type="entry name" value="Ribosomal_TL5_C"/>
    <property type="match status" value="1"/>
</dbReference>
<dbReference type="SUPFAM" id="SSF50715">
    <property type="entry name" value="Ribosomal protein L25-like"/>
    <property type="match status" value="1"/>
</dbReference>
<feature type="chain" id="PRO_1000142564" description="Large ribosomal subunit protein bL25">
    <location>
        <begin position="1"/>
        <end position="203"/>
    </location>
</feature>
<keyword id="KW-1185">Reference proteome</keyword>
<keyword id="KW-0687">Ribonucleoprotein</keyword>
<keyword id="KW-0689">Ribosomal protein</keyword>
<keyword id="KW-0694">RNA-binding</keyword>
<keyword id="KW-0699">rRNA-binding</keyword>
<evidence type="ECO:0000255" key="1">
    <source>
        <dbReference type="HAMAP-Rule" id="MF_01334"/>
    </source>
</evidence>
<evidence type="ECO:0000305" key="2"/>
<gene>
    <name evidence="1" type="primary">rplY</name>
    <name evidence="1" type="synonym">ctc</name>
    <name type="ordered locus">Xaut_2607</name>
</gene>
<proteinExistence type="inferred from homology"/>